<gene>
    <name evidence="1" type="primary">nuoI</name>
    <name type="ordered locus">FP2223</name>
</gene>
<feature type="chain" id="PRO_0000298494" description="NADH-quinone oxidoreductase subunit I">
    <location>
        <begin position="1"/>
        <end position="183"/>
    </location>
</feature>
<feature type="domain" description="4Fe-4S ferredoxin-type 1" evidence="1">
    <location>
        <begin position="71"/>
        <end position="100"/>
    </location>
</feature>
<feature type="domain" description="4Fe-4S ferredoxin-type 2" evidence="1">
    <location>
        <begin position="117"/>
        <end position="146"/>
    </location>
</feature>
<feature type="binding site" evidence="1">
    <location>
        <position position="80"/>
    </location>
    <ligand>
        <name>[4Fe-4S] cluster</name>
        <dbReference type="ChEBI" id="CHEBI:49883"/>
        <label>1</label>
    </ligand>
</feature>
<feature type="binding site" evidence="1">
    <location>
        <position position="83"/>
    </location>
    <ligand>
        <name>[4Fe-4S] cluster</name>
        <dbReference type="ChEBI" id="CHEBI:49883"/>
        <label>1</label>
    </ligand>
</feature>
<feature type="binding site" evidence="1">
    <location>
        <position position="86"/>
    </location>
    <ligand>
        <name>[4Fe-4S] cluster</name>
        <dbReference type="ChEBI" id="CHEBI:49883"/>
        <label>1</label>
    </ligand>
</feature>
<feature type="binding site" evidence="1">
    <location>
        <position position="90"/>
    </location>
    <ligand>
        <name>[4Fe-4S] cluster</name>
        <dbReference type="ChEBI" id="CHEBI:49883"/>
        <label>2</label>
    </ligand>
</feature>
<feature type="binding site" evidence="1">
    <location>
        <position position="126"/>
    </location>
    <ligand>
        <name>[4Fe-4S] cluster</name>
        <dbReference type="ChEBI" id="CHEBI:49883"/>
        <label>2</label>
    </ligand>
</feature>
<feature type="binding site" evidence="1">
    <location>
        <position position="129"/>
    </location>
    <ligand>
        <name>[4Fe-4S] cluster</name>
        <dbReference type="ChEBI" id="CHEBI:49883"/>
        <label>2</label>
    </ligand>
</feature>
<feature type="binding site" evidence="1">
    <location>
        <position position="132"/>
    </location>
    <ligand>
        <name>[4Fe-4S] cluster</name>
        <dbReference type="ChEBI" id="CHEBI:49883"/>
        <label>2</label>
    </ligand>
</feature>
<feature type="binding site" evidence="1">
    <location>
        <position position="136"/>
    </location>
    <ligand>
        <name>[4Fe-4S] cluster</name>
        <dbReference type="ChEBI" id="CHEBI:49883"/>
        <label>1</label>
    </ligand>
</feature>
<proteinExistence type="inferred from homology"/>
<name>NUOI_FLAPJ</name>
<accession>A6H1Q5</accession>
<sequence length="183" mass="21038">MSTTIQNISLSGRKKQVSNKEMTFLESLYLVAIVKGLLITIKHFFRKKVTIHYPEQVREMSPVYRGQHMLKRDEQGRENCTACGLCALSCPAEAITMKAAERKSNEKHLYREEKYAEIYEINMLRCIFCGLCEEACPKDAIYLTTSKVLVPSNYERENFIFGKDKLVMPLDIAMQNAQLKNAN</sequence>
<comment type="function">
    <text evidence="1">NDH-1 shuttles electrons from NADH, via FMN and iron-sulfur (Fe-S) centers, to quinones in the respiratory chain. The immediate electron acceptor for the enzyme in this species is believed to be ubiquinone. Couples the redox reaction to proton translocation (for every two electrons transferred, four hydrogen ions are translocated across the cytoplasmic membrane), and thus conserves the redox energy in a proton gradient.</text>
</comment>
<comment type="catalytic activity">
    <reaction evidence="1">
        <text>a quinone + NADH + 5 H(+)(in) = a quinol + NAD(+) + 4 H(+)(out)</text>
        <dbReference type="Rhea" id="RHEA:57888"/>
        <dbReference type="ChEBI" id="CHEBI:15378"/>
        <dbReference type="ChEBI" id="CHEBI:24646"/>
        <dbReference type="ChEBI" id="CHEBI:57540"/>
        <dbReference type="ChEBI" id="CHEBI:57945"/>
        <dbReference type="ChEBI" id="CHEBI:132124"/>
    </reaction>
</comment>
<comment type="cofactor">
    <cofactor evidence="1">
        <name>[4Fe-4S] cluster</name>
        <dbReference type="ChEBI" id="CHEBI:49883"/>
    </cofactor>
    <text evidence="1">Binds 2 [4Fe-4S] clusters per subunit.</text>
</comment>
<comment type="subunit">
    <text evidence="1">NDH-1 is composed of 14 different subunits. Subunits NuoA, H, J, K, L, M, N constitute the membrane sector of the complex.</text>
</comment>
<comment type="subcellular location">
    <subcellularLocation>
        <location evidence="1">Cell inner membrane</location>
        <topology evidence="1">Peripheral membrane protein</topology>
    </subcellularLocation>
</comment>
<comment type="similarity">
    <text evidence="1">Belongs to the complex I 23 kDa subunit family.</text>
</comment>
<keyword id="KW-0004">4Fe-4S</keyword>
<keyword id="KW-0997">Cell inner membrane</keyword>
<keyword id="KW-1003">Cell membrane</keyword>
<keyword id="KW-0408">Iron</keyword>
<keyword id="KW-0411">Iron-sulfur</keyword>
<keyword id="KW-0472">Membrane</keyword>
<keyword id="KW-0479">Metal-binding</keyword>
<keyword id="KW-0520">NAD</keyword>
<keyword id="KW-0874">Quinone</keyword>
<keyword id="KW-1185">Reference proteome</keyword>
<keyword id="KW-0677">Repeat</keyword>
<keyword id="KW-1278">Translocase</keyword>
<keyword id="KW-0830">Ubiquinone</keyword>
<reference key="1">
    <citation type="journal article" date="2007" name="Nat. Biotechnol.">
        <title>Complete genome sequence of the fish pathogen Flavobacterium psychrophilum.</title>
        <authorList>
            <person name="Duchaud E."/>
            <person name="Boussaha M."/>
            <person name="Loux V."/>
            <person name="Bernardet J.-F."/>
            <person name="Michel C."/>
            <person name="Kerouault B."/>
            <person name="Mondot S."/>
            <person name="Nicolas P."/>
            <person name="Bossy R."/>
            <person name="Caron C."/>
            <person name="Bessieres P."/>
            <person name="Gibrat J.-F."/>
            <person name="Claverol S."/>
            <person name="Dumetz F."/>
            <person name="Le Henaff M."/>
            <person name="Benmansour A."/>
        </authorList>
    </citation>
    <scope>NUCLEOTIDE SEQUENCE [LARGE SCALE GENOMIC DNA]</scope>
    <source>
        <strain>ATCC 49511 / DSM 21280 / CIP 103535 / JIP02/86</strain>
    </source>
</reference>
<organism>
    <name type="scientific">Flavobacterium psychrophilum (strain ATCC 49511 / DSM 21280 / CIP 103535 / JIP02/86)</name>
    <dbReference type="NCBI Taxonomy" id="402612"/>
    <lineage>
        <taxon>Bacteria</taxon>
        <taxon>Pseudomonadati</taxon>
        <taxon>Bacteroidota</taxon>
        <taxon>Flavobacteriia</taxon>
        <taxon>Flavobacteriales</taxon>
        <taxon>Flavobacteriaceae</taxon>
        <taxon>Flavobacterium</taxon>
    </lineage>
</organism>
<protein>
    <recommendedName>
        <fullName evidence="1">NADH-quinone oxidoreductase subunit I</fullName>
        <ecNumber evidence="1">7.1.1.-</ecNumber>
    </recommendedName>
    <alternativeName>
        <fullName evidence="1">NADH dehydrogenase I subunit I</fullName>
    </alternativeName>
    <alternativeName>
        <fullName evidence="1">NDH-1 subunit I</fullName>
    </alternativeName>
</protein>
<dbReference type="EC" id="7.1.1.-" evidence="1"/>
<dbReference type="EMBL" id="AM398681">
    <property type="protein sequence ID" value="CAL44279.1"/>
    <property type="molecule type" value="Genomic_DNA"/>
</dbReference>
<dbReference type="RefSeq" id="WP_011964313.1">
    <property type="nucleotide sequence ID" value="NC_009613.3"/>
</dbReference>
<dbReference type="RefSeq" id="YP_001297080.1">
    <property type="nucleotide sequence ID" value="NC_009613.3"/>
</dbReference>
<dbReference type="SMR" id="A6H1Q5"/>
<dbReference type="STRING" id="402612.FP2223"/>
<dbReference type="EnsemblBacteria" id="CAL44279">
    <property type="protein sequence ID" value="CAL44279"/>
    <property type="gene ID" value="FP2223"/>
</dbReference>
<dbReference type="KEGG" id="fps:FP2223"/>
<dbReference type="PATRIC" id="fig|402612.5.peg.2273"/>
<dbReference type="eggNOG" id="COG1143">
    <property type="taxonomic scope" value="Bacteria"/>
</dbReference>
<dbReference type="HOGENOM" id="CLU_067218_4_3_10"/>
<dbReference type="OrthoDB" id="9808559at2"/>
<dbReference type="Proteomes" id="UP000006394">
    <property type="component" value="Chromosome"/>
</dbReference>
<dbReference type="GO" id="GO:0005886">
    <property type="term" value="C:plasma membrane"/>
    <property type="evidence" value="ECO:0007669"/>
    <property type="project" value="UniProtKB-SubCell"/>
</dbReference>
<dbReference type="GO" id="GO:0051539">
    <property type="term" value="F:4 iron, 4 sulfur cluster binding"/>
    <property type="evidence" value="ECO:0007669"/>
    <property type="project" value="UniProtKB-KW"/>
</dbReference>
<dbReference type="GO" id="GO:0005506">
    <property type="term" value="F:iron ion binding"/>
    <property type="evidence" value="ECO:0007669"/>
    <property type="project" value="UniProtKB-UniRule"/>
</dbReference>
<dbReference type="GO" id="GO:0050136">
    <property type="term" value="F:NADH:ubiquinone reductase (non-electrogenic) activity"/>
    <property type="evidence" value="ECO:0007669"/>
    <property type="project" value="UniProtKB-UniRule"/>
</dbReference>
<dbReference type="GO" id="GO:0048038">
    <property type="term" value="F:quinone binding"/>
    <property type="evidence" value="ECO:0007669"/>
    <property type="project" value="UniProtKB-KW"/>
</dbReference>
<dbReference type="GO" id="GO:0009060">
    <property type="term" value="P:aerobic respiration"/>
    <property type="evidence" value="ECO:0007669"/>
    <property type="project" value="TreeGrafter"/>
</dbReference>
<dbReference type="Gene3D" id="3.30.70.3270">
    <property type="match status" value="1"/>
</dbReference>
<dbReference type="HAMAP" id="MF_01351">
    <property type="entry name" value="NDH1_NuoI"/>
    <property type="match status" value="1"/>
</dbReference>
<dbReference type="InterPro" id="IPR017896">
    <property type="entry name" value="4Fe4S_Fe-S-bd"/>
</dbReference>
<dbReference type="InterPro" id="IPR017900">
    <property type="entry name" value="4Fe4S_Fe_S_CS"/>
</dbReference>
<dbReference type="InterPro" id="IPR010226">
    <property type="entry name" value="NADH_quinone_OxRdtase_chainI"/>
</dbReference>
<dbReference type="NCBIfam" id="TIGR01971">
    <property type="entry name" value="NuoI"/>
    <property type="match status" value="1"/>
</dbReference>
<dbReference type="PANTHER" id="PTHR10849:SF20">
    <property type="entry name" value="NADH DEHYDROGENASE [UBIQUINONE] IRON-SULFUR PROTEIN 8, MITOCHONDRIAL"/>
    <property type="match status" value="1"/>
</dbReference>
<dbReference type="PANTHER" id="PTHR10849">
    <property type="entry name" value="NADH DEHYDROGENASE UBIQUINONE IRON-SULFUR PROTEIN 8, MITOCHONDRIAL"/>
    <property type="match status" value="1"/>
</dbReference>
<dbReference type="Pfam" id="PF12838">
    <property type="entry name" value="Fer4_7"/>
    <property type="match status" value="1"/>
</dbReference>
<dbReference type="SUPFAM" id="SSF54862">
    <property type="entry name" value="4Fe-4S ferredoxins"/>
    <property type="match status" value="1"/>
</dbReference>
<dbReference type="PROSITE" id="PS00198">
    <property type="entry name" value="4FE4S_FER_1"/>
    <property type="match status" value="2"/>
</dbReference>
<dbReference type="PROSITE" id="PS51379">
    <property type="entry name" value="4FE4S_FER_2"/>
    <property type="match status" value="2"/>
</dbReference>
<evidence type="ECO:0000255" key="1">
    <source>
        <dbReference type="HAMAP-Rule" id="MF_01351"/>
    </source>
</evidence>